<accession>B7MG21</accession>
<keyword id="KW-0046">Antibiotic resistance</keyword>
<keyword id="KW-0997">Cell inner membrane</keyword>
<keyword id="KW-1003">Cell membrane</keyword>
<keyword id="KW-0328">Glycosyltransferase</keyword>
<keyword id="KW-0441">Lipid A biosynthesis</keyword>
<keyword id="KW-0444">Lipid biosynthesis</keyword>
<keyword id="KW-0443">Lipid metabolism</keyword>
<keyword id="KW-0448">Lipopolysaccharide biosynthesis</keyword>
<keyword id="KW-0472">Membrane</keyword>
<keyword id="KW-1185">Reference proteome</keyword>
<keyword id="KW-0808">Transferase</keyword>
<keyword id="KW-0812">Transmembrane</keyword>
<keyword id="KW-1133">Transmembrane helix</keyword>
<comment type="function">
    <text evidence="1">Catalyzes the transfer of 4-deoxy-4-formamido-L-arabinose from UDP to undecaprenyl phosphate. The modified arabinose is attached to lipid A and is required for resistance to polymyxin and cationic antimicrobial peptides.</text>
</comment>
<comment type="catalytic activity">
    <reaction evidence="1">
        <text>UDP-4-deoxy-4-formamido-beta-L-arabinose + di-trans,octa-cis-undecaprenyl phosphate = 4-deoxy-4-formamido-alpha-L-arabinopyranosyl di-trans,octa-cis-undecaprenyl phosphate + UDP</text>
        <dbReference type="Rhea" id="RHEA:27722"/>
        <dbReference type="ChEBI" id="CHEBI:58223"/>
        <dbReference type="ChEBI" id="CHEBI:58709"/>
        <dbReference type="ChEBI" id="CHEBI:58909"/>
        <dbReference type="ChEBI" id="CHEBI:60392"/>
        <dbReference type="EC" id="2.4.2.53"/>
    </reaction>
</comment>
<comment type="pathway">
    <text evidence="1">Glycolipid biosynthesis; 4-amino-4-deoxy-alpha-L-arabinose undecaprenyl phosphate biosynthesis; 4-amino-4-deoxy-alpha-L-arabinose undecaprenyl phosphate from UDP-4-deoxy-4-formamido-beta-L-arabinose and undecaprenyl phosphate: step 1/2.</text>
</comment>
<comment type="pathway">
    <text evidence="1">Bacterial outer membrane biogenesis; lipopolysaccharide biosynthesis.</text>
</comment>
<comment type="subcellular location">
    <subcellularLocation>
        <location evidence="1">Cell inner membrane</location>
        <topology evidence="1">Multi-pass membrane protein</topology>
    </subcellularLocation>
</comment>
<comment type="similarity">
    <text evidence="1">Belongs to the glycosyltransferase 2 family.</text>
</comment>
<dbReference type="EC" id="2.4.2.53" evidence="1"/>
<dbReference type="EMBL" id="CU928161">
    <property type="protein sequence ID" value="CAR03683.1"/>
    <property type="molecule type" value="Genomic_DNA"/>
</dbReference>
<dbReference type="RefSeq" id="WP_000461633.1">
    <property type="nucleotide sequence ID" value="NC_011742.1"/>
</dbReference>
<dbReference type="SMR" id="B7MG21"/>
<dbReference type="CAZy" id="GT2">
    <property type="family name" value="Glycosyltransferase Family 2"/>
</dbReference>
<dbReference type="KEGG" id="ecz:ECS88_2403"/>
<dbReference type="HOGENOM" id="CLU_033536_0_0_6"/>
<dbReference type="UniPathway" id="UPA00030"/>
<dbReference type="UniPathway" id="UPA00036">
    <property type="reaction ID" value="UER00495"/>
</dbReference>
<dbReference type="Proteomes" id="UP000000747">
    <property type="component" value="Chromosome"/>
</dbReference>
<dbReference type="GO" id="GO:0005886">
    <property type="term" value="C:plasma membrane"/>
    <property type="evidence" value="ECO:0007669"/>
    <property type="project" value="UniProtKB-SubCell"/>
</dbReference>
<dbReference type="GO" id="GO:0016780">
    <property type="term" value="F:phosphotransferase activity, for other substituted phosphate groups"/>
    <property type="evidence" value="ECO:0007669"/>
    <property type="project" value="UniProtKB-UniRule"/>
</dbReference>
<dbReference type="GO" id="GO:0099621">
    <property type="term" value="F:undecaprenyl-phosphate 4-deoxy-4-formamido-L-arabinose transferase activity"/>
    <property type="evidence" value="ECO:0007669"/>
    <property type="project" value="UniProtKB-EC"/>
</dbReference>
<dbReference type="GO" id="GO:0036108">
    <property type="term" value="P:4-amino-4-deoxy-alpha-L-arabinopyranosyl undecaprenyl phosphate biosynthetic process"/>
    <property type="evidence" value="ECO:0007669"/>
    <property type="project" value="UniProtKB-UniRule"/>
</dbReference>
<dbReference type="GO" id="GO:0009245">
    <property type="term" value="P:lipid A biosynthetic process"/>
    <property type="evidence" value="ECO:0007669"/>
    <property type="project" value="UniProtKB-UniRule"/>
</dbReference>
<dbReference type="GO" id="GO:0009103">
    <property type="term" value="P:lipopolysaccharide biosynthetic process"/>
    <property type="evidence" value="ECO:0007669"/>
    <property type="project" value="UniProtKB-UniRule"/>
</dbReference>
<dbReference type="GO" id="GO:0046677">
    <property type="term" value="P:response to antibiotic"/>
    <property type="evidence" value="ECO:0007669"/>
    <property type="project" value="UniProtKB-KW"/>
</dbReference>
<dbReference type="CDD" id="cd04187">
    <property type="entry name" value="DPM1_like_bac"/>
    <property type="match status" value="1"/>
</dbReference>
<dbReference type="FunFam" id="3.90.550.10:FF:000019">
    <property type="entry name" value="Undecaprenyl-phosphate 4-deoxy-4-formamido-L-arabinose transferase"/>
    <property type="match status" value="1"/>
</dbReference>
<dbReference type="Gene3D" id="3.90.550.10">
    <property type="entry name" value="Spore Coat Polysaccharide Biosynthesis Protein SpsA, Chain A"/>
    <property type="match status" value="1"/>
</dbReference>
<dbReference type="HAMAP" id="MF_01164">
    <property type="entry name" value="ArnC_transfer"/>
    <property type="match status" value="1"/>
</dbReference>
<dbReference type="InterPro" id="IPR022857">
    <property type="entry name" value="ArnC_tfrase"/>
</dbReference>
<dbReference type="InterPro" id="IPR001173">
    <property type="entry name" value="Glyco_trans_2-like"/>
</dbReference>
<dbReference type="InterPro" id="IPR050256">
    <property type="entry name" value="Glycosyltransferase_2"/>
</dbReference>
<dbReference type="InterPro" id="IPR029044">
    <property type="entry name" value="Nucleotide-diphossugar_trans"/>
</dbReference>
<dbReference type="NCBIfam" id="NF007986">
    <property type="entry name" value="PRK10714.1"/>
    <property type="match status" value="1"/>
</dbReference>
<dbReference type="PANTHER" id="PTHR48090:SF3">
    <property type="entry name" value="UNDECAPRENYL-PHOSPHATE 4-DEOXY-4-FORMAMIDO-L-ARABINOSE TRANSFERASE"/>
    <property type="match status" value="1"/>
</dbReference>
<dbReference type="PANTHER" id="PTHR48090">
    <property type="entry name" value="UNDECAPRENYL-PHOSPHATE 4-DEOXY-4-FORMAMIDO-L-ARABINOSE TRANSFERASE-RELATED"/>
    <property type="match status" value="1"/>
</dbReference>
<dbReference type="Pfam" id="PF00535">
    <property type="entry name" value="Glycos_transf_2"/>
    <property type="match status" value="1"/>
</dbReference>
<dbReference type="SUPFAM" id="SSF53448">
    <property type="entry name" value="Nucleotide-diphospho-sugar transferases"/>
    <property type="match status" value="1"/>
</dbReference>
<feature type="chain" id="PRO_1000137907" description="Undecaprenyl-phosphate 4-deoxy-4-formamido-L-arabinose transferase">
    <location>
        <begin position="1"/>
        <end position="322"/>
    </location>
</feature>
<feature type="topological domain" description="Cytoplasmic" evidence="1">
    <location>
        <begin position="1"/>
        <end position="235"/>
    </location>
</feature>
<feature type="transmembrane region" description="Helical" evidence="1">
    <location>
        <begin position="236"/>
        <end position="256"/>
    </location>
</feature>
<feature type="topological domain" description="Periplasmic" evidence="1">
    <location>
        <begin position="257"/>
        <end position="269"/>
    </location>
</feature>
<feature type="transmembrane region" description="Helical" evidence="1">
    <location>
        <begin position="270"/>
        <end position="290"/>
    </location>
</feature>
<feature type="topological domain" description="Cytoplasmic" evidence="1">
    <location>
        <begin position="291"/>
        <end position="322"/>
    </location>
</feature>
<name>ARNC_ECO45</name>
<protein>
    <recommendedName>
        <fullName evidence="1">Undecaprenyl-phosphate 4-deoxy-4-formamido-L-arabinose transferase</fullName>
        <ecNumber evidence="1">2.4.2.53</ecNumber>
    </recommendedName>
    <alternativeName>
        <fullName evidence="1">Undecaprenyl-phosphate Ara4FN transferase</fullName>
        <shortName evidence="1">Ara4FN transferase</shortName>
    </alternativeName>
</protein>
<evidence type="ECO:0000255" key="1">
    <source>
        <dbReference type="HAMAP-Rule" id="MF_01164"/>
    </source>
</evidence>
<proteinExistence type="inferred from homology"/>
<organism>
    <name type="scientific">Escherichia coli O45:K1 (strain S88 / ExPEC)</name>
    <dbReference type="NCBI Taxonomy" id="585035"/>
    <lineage>
        <taxon>Bacteria</taxon>
        <taxon>Pseudomonadati</taxon>
        <taxon>Pseudomonadota</taxon>
        <taxon>Gammaproteobacteria</taxon>
        <taxon>Enterobacterales</taxon>
        <taxon>Enterobacteriaceae</taxon>
        <taxon>Escherichia</taxon>
    </lineage>
</organism>
<gene>
    <name evidence="1" type="primary">arnC</name>
    <name type="ordered locus">ECS88_2403</name>
</gene>
<reference key="1">
    <citation type="journal article" date="2009" name="PLoS Genet.">
        <title>Organised genome dynamics in the Escherichia coli species results in highly diverse adaptive paths.</title>
        <authorList>
            <person name="Touchon M."/>
            <person name="Hoede C."/>
            <person name="Tenaillon O."/>
            <person name="Barbe V."/>
            <person name="Baeriswyl S."/>
            <person name="Bidet P."/>
            <person name="Bingen E."/>
            <person name="Bonacorsi S."/>
            <person name="Bouchier C."/>
            <person name="Bouvet O."/>
            <person name="Calteau A."/>
            <person name="Chiapello H."/>
            <person name="Clermont O."/>
            <person name="Cruveiller S."/>
            <person name="Danchin A."/>
            <person name="Diard M."/>
            <person name="Dossat C."/>
            <person name="Karoui M.E."/>
            <person name="Frapy E."/>
            <person name="Garry L."/>
            <person name="Ghigo J.M."/>
            <person name="Gilles A.M."/>
            <person name="Johnson J."/>
            <person name="Le Bouguenec C."/>
            <person name="Lescat M."/>
            <person name="Mangenot S."/>
            <person name="Martinez-Jehanne V."/>
            <person name="Matic I."/>
            <person name="Nassif X."/>
            <person name="Oztas S."/>
            <person name="Petit M.A."/>
            <person name="Pichon C."/>
            <person name="Rouy Z."/>
            <person name="Ruf C.S."/>
            <person name="Schneider D."/>
            <person name="Tourret J."/>
            <person name="Vacherie B."/>
            <person name="Vallenet D."/>
            <person name="Medigue C."/>
            <person name="Rocha E.P.C."/>
            <person name="Denamur E."/>
        </authorList>
    </citation>
    <scope>NUCLEOTIDE SEQUENCE [LARGE SCALE GENOMIC DNA]</scope>
    <source>
        <strain>S88 / ExPEC</strain>
    </source>
</reference>
<sequence>MFEIHPVKKVSVVIPVYNEQESLPELIRRTTAACESLGKEYEILLIDDGSSDNSAHMLVEASQAEGSHIVSILLNRNYGQHSAIMAGFSHVTGDLIITLDADLQNPPEEIPRLVAKADEGYDVVGTVRQNRQDSWFRKTASKMINRLIQRTTGKAMGDYGCMLRAYRRHIVDAMLHCHERSTFIPILANIFARRAIEIPVHHAEREFGESKYSFMRLINLMYDLVTCLTTTPLRMLSLLGSIIAIGGFSIAVLLVILRLTFGPQWAAEGVFMLFAVLFTFIGAQFIGMGLLGEYIGRIYTDVRARPRYFVQQVIRPSSKENE</sequence>